<geneLocation type="plasmid">
    <name>sym pNGR234a</name>
</geneLocation>
<keyword id="KW-0614">Plasmid</keyword>
<keyword id="KW-1185">Reference proteome</keyword>
<evidence type="ECO:0000305" key="1"/>
<accession>P55470</accession>
<comment type="function">
    <text>Could have an enzymatic function.</text>
</comment>
<comment type="similarity">
    <text evidence="1">To V.anguillarum virulence protein VirA.</text>
</comment>
<reference key="1">
    <citation type="journal article" date="1997" name="Nature">
        <title>Molecular basis of symbiosis between Rhizobium and legumes.</title>
        <authorList>
            <person name="Freiberg C.A."/>
            <person name="Fellay R."/>
            <person name="Bairoch A."/>
            <person name="Broughton W.J."/>
            <person name="Rosenthal A."/>
            <person name="Perret X."/>
        </authorList>
    </citation>
    <scope>NUCLEOTIDE SEQUENCE [LARGE SCALE GENOMIC DNA]</scope>
    <source>
        <strain>NBRC 101917 / NGR234</strain>
    </source>
</reference>
<reference key="2">
    <citation type="journal article" date="2009" name="Appl. Environ. Microbiol.">
        <title>Rhizobium sp. strain NGR234 possesses a remarkable number of secretion systems.</title>
        <authorList>
            <person name="Schmeisser C."/>
            <person name="Liesegang H."/>
            <person name="Krysciak D."/>
            <person name="Bakkou N."/>
            <person name="Le Quere A."/>
            <person name="Wollherr A."/>
            <person name="Heinemeyer I."/>
            <person name="Morgenstern B."/>
            <person name="Pommerening-Roeser A."/>
            <person name="Flores M."/>
            <person name="Palacios R."/>
            <person name="Brenner S."/>
            <person name="Gottschalk G."/>
            <person name="Schmitz R.A."/>
            <person name="Broughton W.J."/>
            <person name="Perret X."/>
            <person name="Strittmatter A.W."/>
            <person name="Streit W.R."/>
        </authorList>
    </citation>
    <scope>NUCLEOTIDE SEQUENCE [LARGE SCALE GENOMIC DNA]</scope>
    <source>
        <strain>NBRC 101917 / NGR234</strain>
    </source>
</reference>
<name>Y4GN_SINFN</name>
<protein>
    <recommendedName>
        <fullName>Uncharacterized protein y4gN</fullName>
    </recommendedName>
</protein>
<feature type="chain" id="PRO_0000200848" description="Uncharacterized protein y4gN">
    <location>
        <begin position="1"/>
        <end position="383"/>
    </location>
</feature>
<sequence>MDQTLSRRLFLWHNPQTDNQCRNERHMIHTSKIYREINRIGVQIKGLPDYWMGQARRISYDRVGSAGNTITEGRKPVSADMAILLIYQPRGLLESLFLQLEHLLSKGLGVVIVSNRKVLEHDRNRLSEYCHLIIERKNIGYDFGGYRDGILALHKRSIHPKSLFVMNDSVWFPIRKDCDLIDRCRESRSDIVGVFYNNKSKFPKNHHLQSYFYRFGEKVVSDSRFLAYWRKIPMYNDKRNVIRNLEIKLTKNFQLMGFGISSLYAPEDILKAFKNIEVRNIRPVLDYYISALGYDQNTFWSAYKNESPKGGDTHALPIDVPNSRVFFHFLDAHPEILIRKLNSPIIKKNRDKRFVAQRKAIIEGGFLKEIDAVIQKELINWDR</sequence>
<gene>
    <name type="ordered locus">NGR_a03500</name>
    <name type="ORF">y4gN</name>
</gene>
<organism>
    <name type="scientific">Sinorhizobium fredii (strain NBRC 101917 / NGR234)</name>
    <dbReference type="NCBI Taxonomy" id="394"/>
    <lineage>
        <taxon>Bacteria</taxon>
        <taxon>Pseudomonadati</taxon>
        <taxon>Pseudomonadota</taxon>
        <taxon>Alphaproteobacteria</taxon>
        <taxon>Hyphomicrobiales</taxon>
        <taxon>Rhizobiaceae</taxon>
        <taxon>Sinorhizobium/Ensifer group</taxon>
        <taxon>Sinorhizobium</taxon>
    </lineage>
</organism>
<proteinExistence type="predicted"/>
<dbReference type="EMBL" id="U00090">
    <property type="protein sequence ID" value="AAB91688.1"/>
    <property type="molecule type" value="Genomic_DNA"/>
</dbReference>
<dbReference type="RefSeq" id="NP_443876.1">
    <property type="nucleotide sequence ID" value="NC_000914.2"/>
</dbReference>
<dbReference type="KEGG" id="rhi:NGR_a03500"/>
<dbReference type="PATRIC" id="fig|394.7.peg.358"/>
<dbReference type="eggNOG" id="COG3754">
    <property type="taxonomic scope" value="Bacteria"/>
</dbReference>
<dbReference type="HOGENOM" id="CLU_060953_0_0_5"/>
<dbReference type="OrthoDB" id="9816424at2"/>
<dbReference type="Proteomes" id="UP000001054">
    <property type="component" value="Plasmid pNGR234a"/>
</dbReference>
<dbReference type="InterPro" id="IPR007739">
    <property type="entry name" value="RgpF"/>
</dbReference>
<dbReference type="Pfam" id="PF05045">
    <property type="entry name" value="RgpF"/>
    <property type="match status" value="1"/>
</dbReference>